<comment type="function">
    <text evidence="2 3">Component of the heterodimeric BagAB ATPase complex, whose two subunits are actively involved in ATP hydrolysis (PubMed:31036728, PubMed:32482725). The ATPase activity is required to mediate resistance against nitric oxide (NO) and elevated levels of glycerol (PubMed:32482725).</text>
</comment>
<comment type="activity regulation">
    <text evidence="2">The ATPase activity of the BagAB complex is not stimulated by antimonite, an arsenite substitute, suggesting that BagAB is not a transporter for this family of elements.</text>
</comment>
<comment type="subunit">
    <text evidence="2 3">Forms a heterodimer composed of BagA and BagB (PubMed:31036728, PubMed:32482725). Interacts with Rv1509 (PubMed:32482725). Also interacts with a large number of proteins, including proteins required for mycolic acid biosynthesis (PubMed:32482725).</text>
</comment>
<comment type="domain">
    <text evidence="2">Binds nucleotides asymmetrically (PubMed:31036728). The two ATPase domains of BagAB are spatially separated by the large central cavity and they do not physically interact with each other (PubMed:31036728).</text>
</comment>
<comment type="disruption phenotype">
    <text evidence="2 3">Deletion of both bagA and bagB does not reveal any conspicuous growth defects in vitro (PubMed:31036728). The double mutant is fully virulent in the tuberculosis mouse model (PubMed:31036728, PubMed:32482725). The double deletion mutant is not hypersusceptible to arsenite in culture medium, but it is significantly more susceptible to nitric oxide (NO) and it exhibits a glycerol-dependent recovery defect following mouse infection (PubMed:32482725). The double mutant is hypersusceptible to extracellular methylglyoxal, suggesting that the glycerol-dependent toxicity is due to heightened sensitivity to methylglyoxal generation (PubMed:32482725).</text>
</comment>
<comment type="miscellaneous">
    <text evidence="1">Was identified as a high-confidence drug target.</text>
</comment>
<comment type="similarity">
    <text evidence="5">Belongs to the arsA ATPase family. BagA/BagB subfamily.</text>
</comment>
<proteinExistence type="evidence at protein level"/>
<sequence>MVATTSSGGSSVGWPSRLSGVRLHLVTGKGGTGKSTIAAALALTLAAGGRKVLLVEVEGRQGIAQLFDVPPLPYQELKIATAERGGQVNALAIDIEAAFLEYLDMFYNLGIAGRAMRRIGAVEFATTIAPGLRDVLLTGKIKETVVRLDKNKLPVYDAIVVDAPPTGRIARFLDVTKAVSDLAKGGPVHAQSEGVVKLLHSNQTAIHLVTLLEALPVQETLEAIEELAQMELPIGSVIVNRNIPAHLEPQDLAKAAEGEVDADSVRAGLLTAGVKLPDADFAGLLTETIQHATRITARAEIAQQLDALQVPRLELPTVSDGVDLGSLYELSESLAQQGVR</sequence>
<organism>
    <name type="scientific">Mycobacterium tuberculosis (strain ATCC 25618 / H37Rv)</name>
    <dbReference type="NCBI Taxonomy" id="83332"/>
    <lineage>
        <taxon>Bacteria</taxon>
        <taxon>Bacillati</taxon>
        <taxon>Actinomycetota</taxon>
        <taxon>Actinomycetes</taxon>
        <taxon>Mycobacteriales</taxon>
        <taxon>Mycobacteriaceae</taxon>
        <taxon>Mycobacterium</taxon>
        <taxon>Mycobacterium tuberculosis complex</taxon>
    </lineage>
</organism>
<accession>P9WKX5</accession>
<accession>L0TD83</accession>
<accession>O69647</accession>
<accession>P65089</accession>
<keyword id="KW-0002">3D-structure</keyword>
<keyword id="KW-0067">ATP-binding</keyword>
<keyword id="KW-0378">Hydrolase</keyword>
<keyword id="KW-0547">Nucleotide-binding</keyword>
<keyword id="KW-1185">Reference proteome</keyword>
<gene>
    <name evidence="4" type="primary">bagA</name>
    <name evidence="7" type="ordered locus">Rv3679</name>
    <name type="ORF">MTV025.027</name>
</gene>
<reference evidence="7" key="1">
    <citation type="journal article" date="1998" name="Nature">
        <title>Deciphering the biology of Mycobacterium tuberculosis from the complete genome sequence.</title>
        <authorList>
            <person name="Cole S.T."/>
            <person name="Brosch R."/>
            <person name="Parkhill J."/>
            <person name="Garnier T."/>
            <person name="Churcher C.M."/>
            <person name="Harris D.E."/>
            <person name="Gordon S.V."/>
            <person name="Eiglmeier K."/>
            <person name="Gas S."/>
            <person name="Barry C.E. III"/>
            <person name="Tekaia F."/>
            <person name="Badcock K."/>
            <person name="Basham D."/>
            <person name="Brown D."/>
            <person name="Chillingworth T."/>
            <person name="Connor R."/>
            <person name="Davies R.M."/>
            <person name="Devlin K."/>
            <person name="Feltwell T."/>
            <person name="Gentles S."/>
            <person name="Hamlin N."/>
            <person name="Holroyd S."/>
            <person name="Hornsby T."/>
            <person name="Jagels K."/>
            <person name="Krogh A."/>
            <person name="McLean J."/>
            <person name="Moule S."/>
            <person name="Murphy L.D."/>
            <person name="Oliver S."/>
            <person name="Osborne J."/>
            <person name="Quail M.A."/>
            <person name="Rajandream M.A."/>
            <person name="Rogers J."/>
            <person name="Rutter S."/>
            <person name="Seeger K."/>
            <person name="Skelton S."/>
            <person name="Squares S."/>
            <person name="Squares R."/>
            <person name="Sulston J.E."/>
            <person name="Taylor K."/>
            <person name="Whitehead S."/>
            <person name="Barrell B.G."/>
        </authorList>
    </citation>
    <scope>NUCLEOTIDE SEQUENCE [LARGE SCALE GENOMIC DNA]</scope>
    <source>
        <strain>ATCC 25618 / H37Rv</strain>
    </source>
</reference>
<reference key="2">
    <citation type="journal article" date="2008" name="BMC Syst. Biol.">
        <title>targetTB: a target identification pipeline for Mycobacterium tuberculosis through an interactome, reactome and genome-scale structural analysis.</title>
        <authorList>
            <person name="Raman K."/>
            <person name="Yeturu K."/>
            <person name="Chandra N."/>
        </authorList>
    </citation>
    <scope>IDENTIFICATION AS A DRUG TARGET [LARGE SCALE ANALYSIS]</scope>
</reference>
<reference key="3">
    <citation type="journal article" date="2011" name="Mol. Cell. Proteomics">
        <title>Proteogenomic analysis of Mycobacterium tuberculosis by high resolution mass spectrometry.</title>
        <authorList>
            <person name="Kelkar D.S."/>
            <person name="Kumar D."/>
            <person name="Kumar P."/>
            <person name="Balakrishnan L."/>
            <person name="Muthusamy B."/>
            <person name="Yadav A.K."/>
            <person name="Shrivastava P."/>
            <person name="Marimuthu A."/>
            <person name="Anand S."/>
            <person name="Sundaram H."/>
            <person name="Kingsbury R."/>
            <person name="Harsha H.C."/>
            <person name="Nair B."/>
            <person name="Prasad T.S."/>
            <person name="Chauhan D.S."/>
            <person name="Katoch K."/>
            <person name="Katoch V.M."/>
            <person name="Kumar P."/>
            <person name="Chaerkady R."/>
            <person name="Ramachandran S."/>
            <person name="Dash D."/>
            <person name="Pandey A."/>
        </authorList>
    </citation>
    <scope>IDENTIFICATION BY MASS SPECTROMETRY [LARGE SCALE ANALYSIS]</scope>
    <source>
        <strain>ATCC 25618 / H37Rv</strain>
    </source>
</reference>
<reference key="4">
    <citation type="journal article" date="2020" name="J. Bacteriol.">
        <title>Two interacting ATPases protect Mycobacterium tuberculosis from glycerol and nitric oxide toxicity.</title>
        <authorList>
            <person name="Whitaker M."/>
            <person name="Ruecker N."/>
            <person name="Hartman T."/>
            <person name="Klevorn T."/>
            <person name="Andres J."/>
            <person name="Kim J."/>
            <person name="Rhee K."/>
            <person name="Ehrt S."/>
        </authorList>
    </citation>
    <scope>FUNCTION</scope>
    <scope>ATPASE ACTIVITY</scope>
    <scope>SUBUNIT</scope>
    <scope>DISRUPTION PHENOTYPE</scope>
    <scope>MUTAGENESIS OF LYS-34</scope>
    <source>
        <strain>H37Rv</strain>
    </source>
</reference>
<reference evidence="8 9 10" key="5">
    <citation type="journal article" date="2019" name="J. Bacteriol.">
        <title>Characterization of Guided Entry of Tail-Anchored Proteins 3 Homologues in Mycobacterium tuberculosis.</title>
        <authorList>
            <person name="Hu K."/>
            <person name="Jordan A.T."/>
            <person name="Zhang S."/>
            <person name="Dhabaria A."/>
            <person name="Kovach A."/>
            <person name="Rangel M.V."/>
            <person name="Ueberheide B."/>
            <person name="Li H."/>
            <person name="Darwin K.H."/>
        </authorList>
    </citation>
    <scope>X-RAY CRYSTALLOGRAPHY (2.30 ANGSTROMS) IN COMPLEXES WITH BAGB; ADP AND ATP ANALOG</scope>
    <scope>FUNCTION</scope>
    <scope>ATPASE ACTIVITY</scope>
    <scope>ACTIVITY REGULATION</scope>
    <scope>SUBUNIT</scope>
    <scope>DOMAIN</scope>
    <scope>DISRUPTION PHENOTYPE</scope>
    <scope>MUTAGENESIS OF GLU-58</scope>
    <source>
        <strain>H37Rv</strain>
    </source>
</reference>
<name>BAGA_MYCTU</name>
<evidence type="ECO:0000269" key="1">
    <source>
    </source>
</evidence>
<evidence type="ECO:0000269" key="2">
    <source>
    </source>
</evidence>
<evidence type="ECO:0000269" key="3">
    <source>
    </source>
</evidence>
<evidence type="ECO:0000303" key="4">
    <source>
    </source>
</evidence>
<evidence type="ECO:0000305" key="5"/>
<evidence type="ECO:0000305" key="6">
    <source>
    </source>
</evidence>
<evidence type="ECO:0000312" key="7">
    <source>
        <dbReference type="EMBL" id="CCP46503.1"/>
    </source>
</evidence>
<evidence type="ECO:0007744" key="8">
    <source>
        <dbReference type="PDB" id="6BS3"/>
    </source>
</evidence>
<evidence type="ECO:0007744" key="9">
    <source>
        <dbReference type="PDB" id="6BS4"/>
    </source>
</evidence>
<evidence type="ECO:0007744" key="10">
    <source>
        <dbReference type="PDB" id="6BS5"/>
    </source>
</evidence>
<evidence type="ECO:0007829" key="11">
    <source>
        <dbReference type="PDB" id="6BS3"/>
    </source>
</evidence>
<evidence type="ECO:0007829" key="12">
    <source>
        <dbReference type="PDB" id="6BS4"/>
    </source>
</evidence>
<dbReference type="EC" id="3.6.1.-" evidence="2 3"/>
<dbReference type="EMBL" id="AL123456">
    <property type="protein sequence ID" value="CCP46503.1"/>
    <property type="molecule type" value="Genomic_DNA"/>
</dbReference>
<dbReference type="PIR" id="H70790">
    <property type="entry name" value="H70790"/>
</dbReference>
<dbReference type="RefSeq" id="NP_218196.1">
    <property type="nucleotide sequence ID" value="NC_000962.3"/>
</dbReference>
<dbReference type="RefSeq" id="WP_003419738.1">
    <property type="nucleotide sequence ID" value="NZ_NVQJ01000028.1"/>
</dbReference>
<dbReference type="PDB" id="6BS3">
    <property type="method" value="X-ray"/>
    <property type="resolution" value="2.30 A"/>
    <property type="chains" value="A=1-340"/>
</dbReference>
<dbReference type="PDB" id="6BS4">
    <property type="method" value="X-ray"/>
    <property type="resolution" value="2.50 A"/>
    <property type="chains" value="A=1-340"/>
</dbReference>
<dbReference type="PDB" id="6BS5">
    <property type="method" value="X-ray"/>
    <property type="resolution" value="3.10 A"/>
    <property type="chains" value="A=1-340"/>
</dbReference>
<dbReference type="PDBsum" id="6BS3"/>
<dbReference type="PDBsum" id="6BS4"/>
<dbReference type="PDBsum" id="6BS5"/>
<dbReference type="SMR" id="P9WKX5"/>
<dbReference type="FunCoup" id="P9WKX5">
    <property type="interactions" value="15"/>
</dbReference>
<dbReference type="STRING" id="83332.Rv3679"/>
<dbReference type="PaxDb" id="83332-Rv3679"/>
<dbReference type="DNASU" id="885809"/>
<dbReference type="GeneID" id="885809"/>
<dbReference type="KEGG" id="mtu:Rv3679"/>
<dbReference type="KEGG" id="mtv:RVBD_3679"/>
<dbReference type="TubercuList" id="Rv3679"/>
<dbReference type="eggNOG" id="COG0003">
    <property type="taxonomic scope" value="Bacteria"/>
</dbReference>
<dbReference type="InParanoid" id="P9WKX5"/>
<dbReference type="OrthoDB" id="5242836at2"/>
<dbReference type="PhylomeDB" id="P9WKX5"/>
<dbReference type="PHI-base" id="PHI:11518"/>
<dbReference type="Proteomes" id="UP000001584">
    <property type="component" value="Chromosome"/>
</dbReference>
<dbReference type="GO" id="GO:0005886">
    <property type="term" value="C:plasma membrane"/>
    <property type="evidence" value="ECO:0007005"/>
    <property type="project" value="MTBBASE"/>
</dbReference>
<dbReference type="GO" id="GO:0005524">
    <property type="term" value="F:ATP binding"/>
    <property type="evidence" value="ECO:0007669"/>
    <property type="project" value="UniProtKB-KW"/>
</dbReference>
<dbReference type="GO" id="GO:0016887">
    <property type="term" value="F:ATP hydrolysis activity"/>
    <property type="evidence" value="ECO:0000318"/>
    <property type="project" value="GO_Central"/>
</dbReference>
<dbReference type="Gene3D" id="3.40.50.300">
    <property type="entry name" value="P-loop containing nucleotide triphosphate hydrolases"/>
    <property type="match status" value="1"/>
</dbReference>
<dbReference type="InterPro" id="IPR025723">
    <property type="entry name" value="Anion-transp_ATPase-like_dom"/>
</dbReference>
<dbReference type="InterPro" id="IPR016300">
    <property type="entry name" value="ATPase_ArsA/GET3"/>
</dbReference>
<dbReference type="InterPro" id="IPR027417">
    <property type="entry name" value="P-loop_NTPase"/>
</dbReference>
<dbReference type="PANTHER" id="PTHR10803">
    <property type="entry name" value="ARSENICAL PUMP-DRIVING ATPASE ARSENITE-TRANSLOCATING ATPASE"/>
    <property type="match status" value="1"/>
</dbReference>
<dbReference type="PANTHER" id="PTHR10803:SF31">
    <property type="entry name" value="ATPASE RV3679-RELATED"/>
    <property type="match status" value="1"/>
</dbReference>
<dbReference type="Pfam" id="PF02374">
    <property type="entry name" value="ArsA_ATPase"/>
    <property type="match status" value="2"/>
</dbReference>
<dbReference type="SUPFAM" id="SSF52540">
    <property type="entry name" value="P-loop containing nucleoside triphosphate hydrolases"/>
    <property type="match status" value="1"/>
</dbReference>
<feature type="chain" id="PRO_0000104143" description="ATPase BagA">
    <location>
        <begin position="1"/>
        <end position="340"/>
    </location>
</feature>
<feature type="binding site" evidence="6 8 9">
    <location>
        <position position="31"/>
    </location>
    <ligand>
        <name>ATP</name>
        <dbReference type="ChEBI" id="CHEBI:30616"/>
    </ligand>
</feature>
<feature type="binding site" evidence="6 8 9 10">
    <location>
        <position position="33"/>
    </location>
    <ligand>
        <name>ATP</name>
        <dbReference type="ChEBI" id="CHEBI:30616"/>
    </ligand>
</feature>
<feature type="binding site" evidence="6 8 9 10">
    <location>
        <position position="34"/>
    </location>
    <ligand>
        <name>ATP</name>
        <dbReference type="ChEBI" id="CHEBI:30616"/>
    </ligand>
</feature>
<feature type="binding site" evidence="6 8 9 10">
    <location>
        <position position="35"/>
    </location>
    <ligand>
        <name>ATP</name>
        <dbReference type="ChEBI" id="CHEBI:30616"/>
    </ligand>
</feature>
<feature type="binding site" evidence="6 8 9 10">
    <location>
        <position position="36"/>
    </location>
    <ligand>
        <name>ATP</name>
        <dbReference type="ChEBI" id="CHEBI:30616"/>
    </ligand>
</feature>
<feature type="binding site" evidence="6 8 9 10">
    <location>
        <position position="240"/>
    </location>
    <ligand>
        <name>ATP</name>
        <dbReference type="ChEBI" id="CHEBI:30616"/>
    </ligand>
</feature>
<feature type="binding site" evidence="6 8 9 10">
    <location>
        <position position="316"/>
    </location>
    <ligand>
        <name>ATP</name>
        <dbReference type="ChEBI" id="CHEBI:30616"/>
    </ligand>
</feature>
<feature type="binding site" evidence="6 8 9 10">
    <location>
        <position position="318"/>
    </location>
    <ligand>
        <name>ATP</name>
        <dbReference type="ChEBI" id="CHEBI:30616"/>
    </ligand>
</feature>
<feature type="mutagenesis site" description="Decreases resistance to elevated glycerol and NO." evidence="3">
    <original>K</original>
    <variation>A</variation>
    <location>
        <position position="34"/>
    </location>
</feature>
<feature type="mutagenesis site" description="Decreases the ATPase activity of the complex." evidence="2">
    <original>E</original>
    <variation>Q</variation>
    <location>
        <position position="58"/>
    </location>
</feature>
<feature type="helix" evidence="11">
    <location>
        <begin position="16"/>
        <end position="19"/>
    </location>
</feature>
<feature type="strand" evidence="11">
    <location>
        <begin position="22"/>
        <end position="29"/>
    </location>
</feature>
<feature type="helix" evidence="11">
    <location>
        <begin position="34"/>
        <end position="46"/>
    </location>
</feature>
<feature type="turn" evidence="11">
    <location>
        <begin position="47"/>
        <end position="49"/>
    </location>
</feature>
<feature type="strand" evidence="11">
    <location>
        <begin position="51"/>
        <end position="56"/>
    </location>
</feature>
<feature type="strand" evidence="11">
    <location>
        <begin position="58"/>
        <end position="60"/>
    </location>
</feature>
<feature type="helix" evidence="11">
    <location>
        <begin position="62"/>
        <end position="66"/>
    </location>
</feature>
<feature type="strand" evidence="11">
    <location>
        <begin position="77"/>
        <end position="82"/>
    </location>
</feature>
<feature type="turn" evidence="11">
    <location>
        <begin position="83"/>
        <end position="85"/>
    </location>
</feature>
<feature type="strand" evidence="11">
    <location>
        <begin position="86"/>
        <end position="92"/>
    </location>
</feature>
<feature type="helix" evidence="11">
    <location>
        <begin position="95"/>
        <end position="107"/>
    </location>
</feature>
<feature type="helix" evidence="11">
    <location>
        <begin position="110"/>
        <end position="117"/>
    </location>
</feature>
<feature type="turn" evidence="11">
    <location>
        <begin position="118"/>
        <end position="120"/>
    </location>
</feature>
<feature type="helix" evidence="11">
    <location>
        <begin position="121"/>
        <end position="128"/>
    </location>
</feature>
<feature type="helix" evidence="11">
    <location>
        <begin position="130"/>
        <end position="146"/>
    </location>
</feature>
<feature type="strand" evidence="12">
    <location>
        <begin position="152"/>
        <end position="155"/>
    </location>
</feature>
<feature type="strand" evidence="11">
    <location>
        <begin position="157"/>
        <end position="162"/>
    </location>
</feature>
<feature type="turn" evidence="11">
    <location>
        <begin position="166"/>
        <end position="168"/>
    </location>
</feature>
<feature type="helix" evidence="11">
    <location>
        <begin position="169"/>
        <end position="172"/>
    </location>
</feature>
<feature type="helix" evidence="11">
    <location>
        <begin position="175"/>
        <end position="179"/>
    </location>
</feature>
<feature type="strand" evidence="12">
    <location>
        <begin position="184"/>
        <end position="187"/>
    </location>
</feature>
<feature type="helix" evidence="11">
    <location>
        <begin position="188"/>
        <end position="200"/>
    </location>
</feature>
<feature type="strand" evidence="11">
    <location>
        <begin position="204"/>
        <end position="210"/>
    </location>
</feature>
<feature type="helix" evidence="11">
    <location>
        <begin position="214"/>
        <end position="229"/>
    </location>
</feature>
<feature type="strand" evidence="11">
    <location>
        <begin position="234"/>
        <end position="242"/>
    </location>
</feature>
<feature type="helix" evidence="11">
    <location>
        <begin position="249"/>
        <end position="255"/>
    </location>
</feature>
<feature type="turn" evidence="11">
    <location>
        <begin position="256"/>
        <end position="258"/>
    </location>
</feature>
<feature type="helix" evidence="11">
    <location>
        <begin position="262"/>
        <end position="271"/>
    </location>
</feature>
<feature type="helix" evidence="11">
    <location>
        <begin position="278"/>
        <end position="302"/>
    </location>
</feature>
<feature type="helix" evidence="11">
    <location>
        <begin position="303"/>
        <end position="305"/>
    </location>
</feature>
<feature type="strand" evidence="11">
    <location>
        <begin position="312"/>
        <end position="316"/>
    </location>
</feature>
<feature type="helix" evidence="11">
    <location>
        <begin position="324"/>
        <end position="336"/>
    </location>
</feature>
<protein>
    <recommendedName>
        <fullName evidence="5">ATPase BagA</fullName>
        <ecNumber evidence="2 3">3.6.1.-</ecNumber>
    </recommendedName>
    <alternativeName>
        <fullName evidence="5">ATPase Rv3679</fullName>
    </alternativeName>
    <alternativeName>
        <fullName evidence="4">Bacterial Get3-like protein A</fullName>
    </alternativeName>
</protein>